<organism>
    <name type="scientific">Shewanella sp. (strain ANA-3)</name>
    <dbReference type="NCBI Taxonomy" id="94122"/>
    <lineage>
        <taxon>Bacteria</taxon>
        <taxon>Pseudomonadati</taxon>
        <taxon>Pseudomonadota</taxon>
        <taxon>Gammaproteobacteria</taxon>
        <taxon>Alteromonadales</taxon>
        <taxon>Shewanellaceae</taxon>
        <taxon>Shewanella</taxon>
    </lineage>
</organism>
<sequence>MTKTERYLQLRSMIPEMRRIKRIHFVGIGGAGMGGIAEVLVNEGYVVSGSDIAQNAVTDRLCLLGAKIHIGHGADNVQQADVVVVSTAINPENPEIIAAKELRIPIVRRAEMLAELMRYRHGVAIAGTHGKTTTTSLIASLYGQAGRDPTFVIGGLLNSAGTNARLGTSRYLIAEADESDASFLHLQPMVSVVTNIEADHMDTYGGDFEKLKSTFVDFLHNLPFYGVAVVCIDDAVVREIMPRIGRHMITYGFSDDADVQALNFHQQGHQCRFTVRRKGKEDLDLLLNLPGQHNVLNALAAIAVATEDEIDDSAIIQALAEFQGIGRRFQHLGKFATPKGEVMLVDDYGHHPSEVAATIKAARAGWPDKRLVMAYQPHRYTRTRDLYEDFIEVLSQVDCLLLLEVYSAGEAPIPGADGRALCRSIRLRGQLDPIFIASPDQLAEVLPDVLQEGDLLLTQGAGNIGALSRQLAASELGFSIAATTEVKP</sequence>
<comment type="function">
    <text evidence="1">Cell wall formation.</text>
</comment>
<comment type="catalytic activity">
    <reaction evidence="1">
        <text>UDP-N-acetyl-alpha-D-muramate + L-alanine + ATP = UDP-N-acetyl-alpha-D-muramoyl-L-alanine + ADP + phosphate + H(+)</text>
        <dbReference type="Rhea" id="RHEA:23372"/>
        <dbReference type="ChEBI" id="CHEBI:15378"/>
        <dbReference type="ChEBI" id="CHEBI:30616"/>
        <dbReference type="ChEBI" id="CHEBI:43474"/>
        <dbReference type="ChEBI" id="CHEBI:57972"/>
        <dbReference type="ChEBI" id="CHEBI:70757"/>
        <dbReference type="ChEBI" id="CHEBI:83898"/>
        <dbReference type="ChEBI" id="CHEBI:456216"/>
        <dbReference type="EC" id="6.3.2.8"/>
    </reaction>
</comment>
<comment type="pathway">
    <text evidence="1">Cell wall biogenesis; peptidoglycan biosynthesis.</text>
</comment>
<comment type="subcellular location">
    <subcellularLocation>
        <location evidence="1">Cytoplasm</location>
    </subcellularLocation>
</comment>
<comment type="similarity">
    <text evidence="1">Belongs to the MurCDEF family.</text>
</comment>
<feature type="chain" id="PRO_1000004409" description="UDP-N-acetylmuramate--L-alanine ligase">
    <location>
        <begin position="1"/>
        <end position="488"/>
    </location>
</feature>
<feature type="binding site" evidence="1">
    <location>
        <begin position="127"/>
        <end position="133"/>
    </location>
    <ligand>
        <name>ATP</name>
        <dbReference type="ChEBI" id="CHEBI:30616"/>
    </ligand>
</feature>
<name>MURC_SHESA</name>
<accession>A0L1P1</accession>
<reference key="1">
    <citation type="submission" date="2006-09" db="EMBL/GenBank/DDBJ databases">
        <title>Complete sequence of chromosome 1 of Shewanella sp. ANA-3.</title>
        <authorList>
            <person name="Copeland A."/>
            <person name="Lucas S."/>
            <person name="Lapidus A."/>
            <person name="Barry K."/>
            <person name="Detter J.C."/>
            <person name="Glavina del Rio T."/>
            <person name="Hammon N."/>
            <person name="Israni S."/>
            <person name="Dalin E."/>
            <person name="Tice H."/>
            <person name="Pitluck S."/>
            <person name="Chertkov O."/>
            <person name="Brettin T."/>
            <person name="Bruce D."/>
            <person name="Han C."/>
            <person name="Tapia R."/>
            <person name="Gilna P."/>
            <person name="Schmutz J."/>
            <person name="Larimer F."/>
            <person name="Land M."/>
            <person name="Hauser L."/>
            <person name="Kyrpides N."/>
            <person name="Kim E."/>
            <person name="Newman D."/>
            <person name="Salticov C."/>
            <person name="Konstantinidis K."/>
            <person name="Klappenback J."/>
            <person name="Tiedje J."/>
            <person name="Richardson P."/>
        </authorList>
    </citation>
    <scope>NUCLEOTIDE SEQUENCE [LARGE SCALE GENOMIC DNA]</scope>
    <source>
        <strain>ANA-3</strain>
    </source>
</reference>
<dbReference type="EC" id="6.3.2.8" evidence="1"/>
<dbReference type="EMBL" id="CP000469">
    <property type="protein sequence ID" value="ABK49960.1"/>
    <property type="molecule type" value="Genomic_DNA"/>
</dbReference>
<dbReference type="RefSeq" id="WP_011718496.1">
    <property type="nucleotide sequence ID" value="NC_008577.1"/>
</dbReference>
<dbReference type="SMR" id="A0L1P1"/>
<dbReference type="STRING" id="94122.Shewana3_3742"/>
<dbReference type="KEGG" id="shn:Shewana3_3742"/>
<dbReference type="eggNOG" id="COG0773">
    <property type="taxonomic scope" value="Bacteria"/>
</dbReference>
<dbReference type="HOGENOM" id="CLU_028104_2_2_6"/>
<dbReference type="OrthoDB" id="9804126at2"/>
<dbReference type="UniPathway" id="UPA00219"/>
<dbReference type="Proteomes" id="UP000002589">
    <property type="component" value="Chromosome"/>
</dbReference>
<dbReference type="GO" id="GO:0005737">
    <property type="term" value="C:cytoplasm"/>
    <property type="evidence" value="ECO:0007669"/>
    <property type="project" value="UniProtKB-SubCell"/>
</dbReference>
<dbReference type="GO" id="GO:0005524">
    <property type="term" value="F:ATP binding"/>
    <property type="evidence" value="ECO:0007669"/>
    <property type="project" value="UniProtKB-UniRule"/>
</dbReference>
<dbReference type="GO" id="GO:0008763">
    <property type="term" value="F:UDP-N-acetylmuramate-L-alanine ligase activity"/>
    <property type="evidence" value="ECO:0007669"/>
    <property type="project" value="UniProtKB-UniRule"/>
</dbReference>
<dbReference type="GO" id="GO:0051301">
    <property type="term" value="P:cell division"/>
    <property type="evidence" value="ECO:0007669"/>
    <property type="project" value="UniProtKB-KW"/>
</dbReference>
<dbReference type="GO" id="GO:0071555">
    <property type="term" value="P:cell wall organization"/>
    <property type="evidence" value="ECO:0007669"/>
    <property type="project" value="UniProtKB-KW"/>
</dbReference>
<dbReference type="GO" id="GO:0009252">
    <property type="term" value="P:peptidoglycan biosynthetic process"/>
    <property type="evidence" value="ECO:0007669"/>
    <property type="project" value="UniProtKB-UniRule"/>
</dbReference>
<dbReference type="GO" id="GO:0008360">
    <property type="term" value="P:regulation of cell shape"/>
    <property type="evidence" value="ECO:0007669"/>
    <property type="project" value="UniProtKB-KW"/>
</dbReference>
<dbReference type="FunFam" id="3.40.1190.10:FF:000001">
    <property type="entry name" value="UDP-N-acetylmuramate--L-alanine ligase"/>
    <property type="match status" value="1"/>
</dbReference>
<dbReference type="FunFam" id="3.40.50.720:FF:000046">
    <property type="entry name" value="UDP-N-acetylmuramate--L-alanine ligase"/>
    <property type="match status" value="1"/>
</dbReference>
<dbReference type="Gene3D" id="3.90.190.20">
    <property type="entry name" value="Mur ligase, C-terminal domain"/>
    <property type="match status" value="1"/>
</dbReference>
<dbReference type="Gene3D" id="3.40.1190.10">
    <property type="entry name" value="Mur-like, catalytic domain"/>
    <property type="match status" value="1"/>
</dbReference>
<dbReference type="Gene3D" id="3.40.50.720">
    <property type="entry name" value="NAD(P)-binding Rossmann-like Domain"/>
    <property type="match status" value="1"/>
</dbReference>
<dbReference type="HAMAP" id="MF_00046">
    <property type="entry name" value="MurC"/>
    <property type="match status" value="1"/>
</dbReference>
<dbReference type="InterPro" id="IPR036565">
    <property type="entry name" value="Mur-like_cat_sf"/>
</dbReference>
<dbReference type="InterPro" id="IPR004101">
    <property type="entry name" value="Mur_ligase_C"/>
</dbReference>
<dbReference type="InterPro" id="IPR036615">
    <property type="entry name" value="Mur_ligase_C_dom_sf"/>
</dbReference>
<dbReference type="InterPro" id="IPR013221">
    <property type="entry name" value="Mur_ligase_cen"/>
</dbReference>
<dbReference type="InterPro" id="IPR000713">
    <property type="entry name" value="Mur_ligase_N"/>
</dbReference>
<dbReference type="InterPro" id="IPR050061">
    <property type="entry name" value="MurCDEF_pg_biosynth"/>
</dbReference>
<dbReference type="InterPro" id="IPR005758">
    <property type="entry name" value="UDP-N-AcMur_Ala_ligase_MurC"/>
</dbReference>
<dbReference type="NCBIfam" id="TIGR01082">
    <property type="entry name" value="murC"/>
    <property type="match status" value="1"/>
</dbReference>
<dbReference type="PANTHER" id="PTHR43445:SF3">
    <property type="entry name" value="UDP-N-ACETYLMURAMATE--L-ALANINE LIGASE"/>
    <property type="match status" value="1"/>
</dbReference>
<dbReference type="PANTHER" id="PTHR43445">
    <property type="entry name" value="UDP-N-ACETYLMURAMATE--L-ALANINE LIGASE-RELATED"/>
    <property type="match status" value="1"/>
</dbReference>
<dbReference type="Pfam" id="PF01225">
    <property type="entry name" value="Mur_ligase"/>
    <property type="match status" value="1"/>
</dbReference>
<dbReference type="Pfam" id="PF02875">
    <property type="entry name" value="Mur_ligase_C"/>
    <property type="match status" value="1"/>
</dbReference>
<dbReference type="Pfam" id="PF08245">
    <property type="entry name" value="Mur_ligase_M"/>
    <property type="match status" value="1"/>
</dbReference>
<dbReference type="SUPFAM" id="SSF51984">
    <property type="entry name" value="MurCD N-terminal domain"/>
    <property type="match status" value="1"/>
</dbReference>
<dbReference type="SUPFAM" id="SSF53623">
    <property type="entry name" value="MurD-like peptide ligases, catalytic domain"/>
    <property type="match status" value="1"/>
</dbReference>
<dbReference type="SUPFAM" id="SSF53244">
    <property type="entry name" value="MurD-like peptide ligases, peptide-binding domain"/>
    <property type="match status" value="1"/>
</dbReference>
<keyword id="KW-0067">ATP-binding</keyword>
<keyword id="KW-0131">Cell cycle</keyword>
<keyword id="KW-0132">Cell division</keyword>
<keyword id="KW-0133">Cell shape</keyword>
<keyword id="KW-0961">Cell wall biogenesis/degradation</keyword>
<keyword id="KW-0963">Cytoplasm</keyword>
<keyword id="KW-0436">Ligase</keyword>
<keyword id="KW-0547">Nucleotide-binding</keyword>
<keyword id="KW-0573">Peptidoglycan synthesis</keyword>
<gene>
    <name evidence="1" type="primary">murC</name>
    <name type="ordered locus">Shewana3_3742</name>
</gene>
<evidence type="ECO:0000255" key="1">
    <source>
        <dbReference type="HAMAP-Rule" id="MF_00046"/>
    </source>
</evidence>
<proteinExistence type="inferred from homology"/>
<protein>
    <recommendedName>
        <fullName evidence="1">UDP-N-acetylmuramate--L-alanine ligase</fullName>
        <ecNumber evidence="1">6.3.2.8</ecNumber>
    </recommendedName>
    <alternativeName>
        <fullName evidence="1">UDP-N-acetylmuramoyl-L-alanine synthetase</fullName>
    </alternativeName>
</protein>